<organism>
    <name type="scientific">Burkholderia pseudomallei (strain 1710b)</name>
    <dbReference type="NCBI Taxonomy" id="320372"/>
    <lineage>
        <taxon>Bacteria</taxon>
        <taxon>Pseudomonadati</taxon>
        <taxon>Pseudomonadota</taxon>
        <taxon>Betaproteobacteria</taxon>
        <taxon>Burkholderiales</taxon>
        <taxon>Burkholderiaceae</taxon>
        <taxon>Burkholderia</taxon>
        <taxon>pseudomallei group</taxon>
    </lineage>
</organism>
<protein>
    <recommendedName>
        <fullName evidence="1">PKHD-type hydroxylase BURPS1710b_A0200</fullName>
        <ecNumber evidence="1">1.14.11.-</ecNumber>
    </recommendedName>
</protein>
<keyword id="KW-0223">Dioxygenase</keyword>
<keyword id="KW-0408">Iron</keyword>
<keyword id="KW-0479">Metal-binding</keyword>
<keyword id="KW-0560">Oxidoreductase</keyword>
<keyword id="KW-0847">Vitamin C</keyword>
<proteinExistence type="inferred from homology"/>
<comment type="cofactor">
    <cofactor evidence="1">
        <name>Fe(2+)</name>
        <dbReference type="ChEBI" id="CHEBI:29033"/>
    </cofactor>
    <text evidence="1">Binds 1 Fe(2+) ion per subunit.</text>
</comment>
<comment type="cofactor">
    <cofactor evidence="1">
        <name>L-ascorbate</name>
        <dbReference type="ChEBI" id="CHEBI:38290"/>
    </cofactor>
</comment>
<accession>Q3JM44</accession>
<sequence>MMLHIPGVLTKEQVAQCRDILDAADWTDGNATSGAQSALAKRNRQLPEGSPAARAAGDAIQDALACNALFFSAALPLKVFPPLFNRYAGGDAFGTHVDNAIRLLRGTDFRVRSDLSATLFLEEPEHYDGGELCVEDTYGVHRAKLPAGDMVLYPASSLHHVTPVTRGARVASFFWIQSMVRDDADRTLLYQLDTQIQRLTAEKGGRDASVIALTGIYHNLLRRWADA</sequence>
<evidence type="ECO:0000255" key="1">
    <source>
        <dbReference type="HAMAP-Rule" id="MF_00657"/>
    </source>
</evidence>
<gene>
    <name type="ordered locus">BURPS1710b_A0200</name>
</gene>
<name>Y4200_BURP1</name>
<dbReference type="EC" id="1.14.11.-" evidence="1"/>
<dbReference type="EMBL" id="CP000125">
    <property type="protein sequence ID" value="ABA53149.1"/>
    <property type="molecule type" value="Genomic_DNA"/>
</dbReference>
<dbReference type="RefSeq" id="WP_004528491.1">
    <property type="nucleotide sequence ID" value="NC_007435.1"/>
</dbReference>
<dbReference type="SMR" id="Q3JM44"/>
<dbReference type="EnsemblBacteria" id="ABA53149">
    <property type="protein sequence ID" value="ABA53149"/>
    <property type="gene ID" value="BURPS1710b_A0200"/>
</dbReference>
<dbReference type="KEGG" id="bpm:BURPS1710b_A0200"/>
<dbReference type="HOGENOM" id="CLU_106663_0_0_4"/>
<dbReference type="Proteomes" id="UP000002700">
    <property type="component" value="Chromosome II"/>
</dbReference>
<dbReference type="GO" id="GO:0016706">
    <property type="term" value="F:2-oxoglutarate-dependent dioxygenase activity"/>
    <property type="evidence" value="ECO:0007669"/>
    <property type="project" value="UniProtKB-UniRule"/>
</dbReference>
<dbReference type="GO" id="GO:0005506">
    <property type="term" value="F:iron ion binding"/>
    <property type="evidence" value="ECO:0007669"/>
    <property type="project" value="UniProtKB-UniRule"/>
</dbReference>
<dbReference type="GO" id="GO:0031418">
    <property type="term" value="F:L-ascorbic acid binding"/>
    <property type="evidence" value="ECO:0007669"/>
    <property type="project" value="UniProtKB-KW"/>
</dbReference>
<dbReference type="GO" id="GO:0006974">
    <property type="term" value="P:DNA damage response"/>
    <property type="evidence" value="ECO:0007669"/>
    <property type="project" value="TreeGrafter"/>
</dbReference>
<dbReference type="GO" id="GO:0006879">
    <property type="term" value="P:intracellular iron ion homeostasis"/>
    <property type="evidence" value="ECO:0007669"/>
    <property type="project" value="TreeGrafter"/>
</dbReference>
<dbReference type="Gene3D" id="2.60.120.620">
    <property type="entry name" value="q2cbj1_9rhob like domain"/>
    <property type="match status" value="1"/>
</dbReference>
<dbReference type="Gene3D" id="4.10.860.20">
    <property type="entry name" value="Rabenosyn, Rab binding domain"/>
    <property type="match status" value="1"/>
</dbReference>
<dbReference type="HAMAP" id="MF_00657">
    <property type="entry name" value="Hydroxyl_YbiX"/>
    <property type="match status" value="1"/>
</dbReference>
<dbReference type="InterPro" id="IPR005123">
    <property type="entry name" value="Oxoglu/Fe-dep_dioxygenase_dom"/>
</dbReference>
<dbReference type="InterPro" id="IPR041097">
    <property type="entry name" value="PKHD_C"/>
</dbReference>
<dbReference type="InterPro" id="IPR023550">
    <property type="entry name" value="PKHD_hydroxylase"/>
</dbReference>
<dbReference type="InterPro" id="IPR006620">
    <property type="entry name" value="Pro_4_hyd_alph"/>
</dbReference>
<dbReference type="InterPro" id="IPR044862">
    <property type="entry name" value="Pro_4_hyd_alph_FE2OG_OXY"/>
</dbReference>
<dbReference type="NCBIfam" id="NF003973">
    <property type="entry name" value="PRK05467.1-2"/>
    <property type="match status" value="1"/>
</dbReference>
<dbReference type="NCBIfam" id="NF003974">
    <property type="entry name" value="PRK05467.1-3"/>
    <property type="match status" value="1"/>
</dbReference>
<dbReference type="NCBIfam" id="NF003975">
    <property type="entry name" value="PRK05467.1-4"/>
    <property type="match status" value="1"/>
</dbReference>
<dbReference type="PANTHER" id="PTHR41536">
    <property type="entry name" value="PKHD-TYPE HYDROXYLASE YBIX"/>
    <property type="match status" value="1"/>
</dbReference>
<dbReference type="PANTHER" id="PTHR41536:SF1">
    <property type="entry name" value="PKHD-TYPE HYDROXYLASE YBIX"/>
    <property type="match status" value="1"/>
</dbReference>
<dbReference type="Pfam" id="PF13640">
    <property type="entry name" value="2OG-FeII_Oxy_3"/>
    <property type="match status" value="1"/>
</dbReference>
<dbReference type="Pfam" id="PF18331">
    <property type="entry name" value="PKHD_C"/>
    <property type="match status" value="1"/>
</dbReference>
<dbReference type="SMART" id="SM00702">
    <property type="entry name" value="P4Hc"/>
    <property type="match status" value="1"/>
</dbReference>
<dbReference type="SUPFAM" id="SSF51197">
    <property type="entry name" value="Clavaminate synthase-like"/>
    <property type="match status" value="1"/>
</dbReference>
<dbReference type="PROSITE" id="PS51471">
    <property type="entry name" value="FE2OG_OXY"/>
    <property type="match status" value="1"/>
</dbReference>
<reference key="1">
    <citation type="journal article" date="2010" name="Genome Biol. Evol.">
        <title>Continuing evolution of Burkholderia mallei through genome reduction and large-scale rearrangements.</title>
        <authorList>
            <person name="Losada L."/>
            <person name="Ronning C.M."/>
            <person name="DeShazer D."/>
            <person name="Woods D."/>
            <person name="Fedorova N."/>
            <person name="Kim H.S."/>
            <person name="Shabalina S.A."/>
            <person name="Pearson T.R."/>
            <person name="Brinkac L."/>
            <person name="Tan P."/>
            <person name="Nandi T."/>
            <person name="Crabtree J."/>
            <person name="Badger J."/>
            <person name="Beckstrom-Sternberg S."/>
            <person name="Saqib M."/>
            <person name="Schutzer S.E."/>
            <person name="Keim P."/>
            <person name="Nierman W.C."/>
        </authorList>
    </citation>
    <scope>NUCLEOTIDE SEQUENCE [LARGE SCALE GENOMIC DNA]</scope>
    <source>
        <strain>1710b</strain>
    </source>
</reference>
<feature type="chain" id="PRO_1000061713" description="PKHD-type hydroxylase BURPS1710b_A0200">
    <location>
        <begin position="1"/>
        <end position="227"/>
    </location>
</feature>
<feature type="domain" description="Fe2OG dioxygenase" evidence="1">
    <location>
        <begin position="78"/>
        <end position="178"/>
    </location>
</feature>
<feature type="binding site" evidence="1">
    <location>
        <position position="96"/>
    </location>
    <ligand>
        <name>Fe cation</name>
        <dbReference type="ChEBI" id="CHEBI:24875"/>
    </ligand>
</feature>
<feature type="binding site" evidence="1">
    <location>
        <position position="98"/>
    </location>
    <ligand>
        <name>Fe cation</name>
        <dbReference type="ChEBI" id="CHEBI:24875"/>
    </ligand>
</feature>
<feature type="binding site" evidence="1">
    <location>
        <position position="159"/>
    </location>
    <ligand>
        <name>Fe cation</name>
        <dbReference type="ChEBI" id="CHEBI:24875"/>
    </ligand>
</feature>
<feature type="binding site" evidence="1">
    <location>
        <position position="169"/>
    </location>
    <ligand>
        <name>2-oxoglutarate</name>
        <dbReference type="ChEBI" id="CHEBI:16810"/>
    </ligand>
</feature>